<protein>
    <recommendedName>
        <fullName evidence="1">5-methyltetrahydropteroyltriglutamate--homocysteine methyltransferase</fullName>
        <ecNumber evidence="1">2.1.1.14</ecNumber>
    </recommendedName>
    <alternativeName>
        <fullName evidence="1">Cobalamin-independent methionine synthase</fullName>
    </alternativeName>
    <alternativeName>
        <fullName evidence="1">Methionine synthase, vitamin-B12 independent isozyme</fullName>
    </alternativeName>
</protein>
<gene>
    <name evidence="1" type="primary">metE</name>
    <name type="ordered locus">gbs2005</name>
</gene>
<comment type="function">
    <text evidence="1">Catalyzes the transfer of a methyl group from 5-methyltetrahydrofolate to homocysteine resulting in methionine formation.</text>
</comment>
<comment type="catalytic activity">
    <reaction evidence="1">
        <text>5-methyltetrahydropteroyltri-L-glutamate + L-homocysteine = tetrahydropteroyltri-L-glutamate + L-methionine</text>
        <dbReference type="Rhea" id="RHEA:21196"/>
        <dbReference type="ChEBI" id="CHEBI:57844"/>
        <dbReference type="ChEBI" id="CHEBI:58140"/>
        <dbReference type="ChEBI" id="CHEBI:58199"/>
        <dbReference type="ChEBI" id="CHEBI:58207"/>
        <dbReference type="EC" id="2.1.1.14"/>
    </reaction>
</comment>
<comment type="cofactor">
    <cofactor evidence="1">
        <name>Zn(2+)</name>
        <dbReference type="ChEBI" id="CHEBI:29105"/>
    </cofactor>
    <text evidence="1">Binds 1 zinc ion per subunit.</text>
</comment>
<comment type="pathway">
    <text evidence="1">Amino-acid biosynthesis; L-methionine biosynthesis via de novo pathway; L-methionine from L-homocysteine (MetE route): step 1/1.</text>
</comment>
<comment type="similarity">
    <text evidence="1">Belongs to the vitamin-B12 independent methionine synthase family.</text>
</comment>
<sequence length="745" mass="84647">MVKVSNLGYPRLGEQREWKQAIEAFWAGNLEQKDLEKQLKQLRINHLKKQKEAGIDLIPVGDFSCYDHVLDLSFQFNVIPKRFDEYERNLDLYFAIARGDKDNVASSMKKWFNTNYHYIVPEWEVETKPHLQNNYLLDLYLEAREVVGDKAKPVITGPITYVSLSSGIVDFEATVQRLLPLYKQVFQDLIDAGATYIQIDEPIFVTDEGELLVDIAKSVYDFFAREVPQAHFIFQTYFESAVCLDKLSKLPVTGFGLDFIHGRAENLAAVKQGLFREKELFAGIVNGRNIWAVNLEETLALLEEIGPFVKRLTLQPSSSLLHVPVTTKYETHLDPVLKNGLSFADEKLKELELLASAFDGNKTKGYHEALSRFSALQAADFRHVALESLAEVKLERSPYKLRQALQAEKLQLPILPTTTIGSFPQSPEIRKKRLAWKRGNLSDSDYKDFIKTEIRRWIAIQEDLDLDVLVHGEFERVDMVEFFGQKLAGFTTTKLGWVQSYGSRAVKPPIIYGDVKHIQPLSLEETVYAQSLTKKPVKGMLTGPITITNWSFERDDISRSDLFNQIALAIKDEIQLLEQSGIAIIQVDEAALREGLPLRQQKQQAYLDDAVAAFKIATSSVKDETQIHTHMCYSKFDEIIDSIRALDADVISIETSRSHGDIIESFETAVYPLGIGLGVYDIHSPRIPTKEEIIVNIQRSLKCLSKEQFWVNPDCGLKTRREAETIAALEVLVSATKEVRQQLDN</sequence>
<reference key="1">
    <citation type="journal article" date="2002" name="Mol. Microbiol.">
        <title>Genome sequence of Streptococcus agalactiae, a pathogen causing invasive neonatal disease.</title>
        <authorList>
            <person name="Glaser P."/>
            <person name="Rusniok C."/>
            <person name="Buchrieser C."/>
            <person name="Chevalier F."/>
            <person name="Frangeul L."/>
            <person name="Msadek T."/>
            <person name="Zouine M."/>
            <person name="Couve E."/>
            <person name="Lalioui L."/>
            <person name="Poyart C."/>
            <person name="Trieu-Cuot P."/>
            <person name="Kunst F."/>
        </authorList>
    </citation>
    <scope>NUCLEOTIDE SEQUENCE [LARGE SCALE GENOMIC DNA]</scope>
    <source>
        <strain>NEM316</strain>
    </source>
</reference>
<organism>
    <name type="scientific">Streptococcus agalactiae serotype III (strain NEM316)</name>
    <dbReference type="NCBI Taxonomy" id="211110"/>
    <lineage>
        <taxon>Bacteria</taxon>
        <taxon>Bacillati</taxon>
        <taxon>Bacillota</taxon>
        <taxon>Bacilli</taxon>
        <taxon>Lactobacillales</taxon>
        <taxon>Streptococcaceae</taxon>
        <taxon>Streptococcus</taxon>
    </lineage>
</organism>
<keyword id="KW-0028">Amino-acid biosynthesis</keyword>
<keyword id="KW-0479">Metal-binding</keyword>
<keyword id="KW-0486">Methionine biosynthesis</keyword>
<keyword id="KW-0489">Methyltransferase</keyword>
<keyword id="KW-0677">Repeat</keyword>
<keyword id="KW-0808">Transferase</keyword>
<keyword id="KW-0862">Zinc</keyword>
<dbReference type="EC" id="2.1.1.14" evidence="1"/>
<dbReference type="EMBL" id="AL766855">
    <property type="protein sequence ID" value="CAD47664.1"/>
    <property type="molecule type" value="Genomic_DNA"/>
</dbReference>
<dbReference type="RefSeq" id="WP_000241563.1">
    <property type="nucleotide sequence ID" value="NC_004368.1"/>
</dbReference>
<dbReference type="SMR" id="P65344"/>
<dbReference type="KEGG" id="san:gbs2005"/>
<dbReference type="eggNOG" id="COG0620">
    <property type="taxonomic scope" value="Bacteria"/>
</dbReference>
<dbReference type="HOGENOM" id="CLU_013175_0_0_9"/>
<dbReference type="UniPathway" id="UPA00051">
    <property type="reaction ID" value="UER00082"/>
</dbReference>
<dbReference type="Proteomes" id="UP000000823">
    <property type="component" value="Chromosome"/>
</dbReference>
<dbReference type="GO" id="GO:0003871">
    <property type="term" value="F:5-methyltetrahydropteroyltriglutamate-homocysteine S-methyltransferase activity"/>
    <property type="evidence" value="ECO:0007669"/>
    <property type="project" value="UniProtKB-UniRule"/>
</dbReference>
<dbReference type="GO" id="GO:0008270">
    <property type="term" value="F:zinc ion binding"/>
    <property type="evidence" value="ECO:0007669"/>
    <property type="project" value="InterPro"/>
</dbReference>
<dbReference type="GO" id="GO:0009086">
    <property type="term" value="P:methionine biosynthetic process"/>
    <property type="evidence" value="ECO:0007669"/>
    <property type="project" value="UniProtKB-UniRule"/>
</dbReference>
<dbReference type="GO" id="GO:0032259">
    <property type="term" value="P:methylation"/>
    <property type="evidence" value="ECO:0007669"/>
    <property type="project" value="UniProtKB-KW"/>
</dbReference>
<dbReference type="CDD" id="cd03311">
    <property type="entry name" value="CIMS_C_terminal_like"/>
    <property type="match status" value="1"/>
</dbReference>
<dbReference type="CDD" id="cd03312">
    <property type="entry name" value="CIMS_N_terminal_like"/>
    <property type="match status" value="1"/>
</dbReference>
<dbReference type="Gene3D" id="3.20.20.210">
    <property type="match status" value="2"/>
</dbReference>
<dbReference type="HAMAP" id="MF_00172">
    <property type="entry name" value="Meth_synth"/>
    <property type="match status" value="1"/>
</dbReference>
<dbReference type="InterPro" id="IPR013215">
    <property type="entry name" value="Cbl-indep_Met_Synth_N"/>
</dbReference>
<dbReference type="InterPro" id="IPR006276">
    <property type="entry name" value="Cobalamin-indep_Met_synthase"/>
</dbReference>
<dbReference type="InterPro" id="IPR002629">
    <property type="entry name" value="Met_Synth_C/arc"/>
</dbReference>
<dbReference type="InterPro" id="IPR038071">
    <property type="entry name" value="UROD/MetE-like_sf"/>
</dbReference>
<dbReference type="NCBIfam" id="TIGR01371">
    <property type="entry name" value="met_syn_B12ind"/>
    <property type="match status" value="1"/>
</dbReference>
<dbReference type="NCBIfam" id="NF003556">
    <property type="entry name" value="PRK05222.1"/>
    <property type="match status" value="1"/>
</dbReference>
<dbReference type="PANTHER" id="PTHR30519">
    <property type="entry name" value="5-METHYLTETRAHYDROPTEROYLTRIGLUTAMATE--HOMOCYSTEINE METHYLTRANSFERASE"/>
    <property type="match status" value="1"/>
</dbReference>
<dbReference type="Pfam" id="PF08267">
    <property type="entry name" value="Meth_synt_1"/>
    <property type="match status" value="1"/>
</dbReference>
<dbReference type="Pfam" id="PF01717">
    <property type="entry name" value="Meth_synt_2"/>
    <property type="match status" value="1"/>
</dbReference>
<dbReference type="PIRSF" id="PIRSF000382">
    <property type="entry name" value="MeTrfase_B12_ind"/>
    <property type="match status" value="1"/>
</dbReference>
<dbReference type="SUPFAM" id="SSF51726">
    <property type="entry name" value="UROD/MetE-like"/>
    <property type="match status" value="2"/>
</dbReference>
<proteinExistence type="inferred from homology"/>
<feature type="chain" id="PRO_0000098666" description="5-methyltetrahydropteroyltriglutamate--homocysteine methyltransferase">
    <location>
        <begin position="1"/>
        <end position="745"/>
    </location>
</feature>
<feature type="active site" description="Proton donor" evidence="1">
    <location>
        <position position="683"/>
    </location>
</feature>
<feature type="binding site" evidence="1">
    <location>
        <begin position="16"/>
        <end position="19"/>
    </location>
    <ligand>
        <name>5-methyltetrahydropteroyltri-L-glutamate</name>
        <dbReference type="ChEBI" id="CHEBI:58207"/>
    </ligand>
</feature>
<feature type="binding site" evidence="1">
    <location>
        <position position="110"/>
    </location>
    <ligand>
        <name>5-methyltetrahydropteroyltri-L-glutamate</name>
        <dbReference type="ChEBI" id="CHEBI:58207"/>
    </ligand>
</feature>
<feature type="binding site" evidence="1">
    <location>
        <begin position="420"/>
        <end position="422"/>
    </location>
    <ligand>
        <name>L-homocysteine</name>
        <dbReference type="ChEBI" id="CHEBI:58199"/>
    </ligand>
</feature>
<feature type="binding site" evidence="1">
    <location>
        <begin position="420"/>
        <end position="422"/>
    </location>
    <ligand>
        <name>L-methionine</name>
        <dbReference type="ChEBI" id="CHEBI:57844"/>
    </ligand>
</feature>
<feature type="binding site" evidence="1">
    <location>
        <position position="473"/>
    </location>
    <ligand>
        <name>L-homocysteine</name>
        <dbReference type="ChEBI" id="CHEBI:58199"/>
    </ligand>
</feature>
<feature type="binding site" evidence="1">
    <location>
        <position position="473"/>
    </location>
    <ligand>
        <name>L-methionine</name>
        <dbReference type="ChEBI" id="CHEBI:57844"/>
    </ligand>
</feature>
<feature type="binding site" evidence="1">
    <location>
        <position position="550"/>
    </location>
    <ligand>
        <name>5-methyltetrahydropteroyltri-L-glutamate</name>
        <dbReference type="ChEBI" id="CHEBI:58207"/>
    </ligand>
</feature>
<feature type="binding site" evidence="1">
    <location>
        <position position="588"/>
    </location>
    <ligand>
        <name>L-homocysteine</name>
        <dbReference type="ChEBI" id="CHEBI:58199"/>
    </ligand>
</feature>
<feature type="binding site" evidence="1">
    <location>
        <position position="588"/>
    </location>
    <ligand>
        <name>L-methionine</name>
        <dbReference type="ChEBI" id="CHEBI:57844"/>
    </ligand>
</feature>
<feature type="binding site" evidence="1">
    <location>
        <position position="594"/>
    </location>
    <ligand>
        <name>5-methyltetrahydropteroyltri-L-glutamate</name>
        <dbReference type="ChEBI" id="CHEBI:58207"/>
    </ligand>
</feature>
<feature type="binding site" evidence="1">
    <location>
        <position position="630"/>
    </location>
    <ligand>
        <name>Zn(2+)</name>
        <dbReference type="ChEBI" id="CHEBI:29105"/>
        <note>catalytic</note>
    </ligand>
</feature>
<feature type="binding site" evidence="1">
    <location>
        <position position="632"/>
    </location>
    <ligand>
        <name>Zn(2+)</name>
        <dbReference type="ChEBI" id="CHEBI:29105"/>
        <note>catalytic</note>
    </ligand>
</feature>
<feature type="binding site" evidence="1">
    <location>
        <position position="654"/>
    </location>
    <ligand>
        <name>Zn(2+)</name>
        <dbReference type="ChEBI" id="CHEBI:29105"/>
        <note>catalytic</note>
    </ligand>
</feature>
<feature type="binding site" evidence="1">
    <location>
        <position position="715"/>
    </location>
    <ligand>
        <name>Zn(2+)</name>
        <dbReference type="ChEBI" id="CHEBI:29105"/>
        <note>catalytic</note>
    </ligand>
</feature>
<evidence type="ECO:0000255" key="1">
    <source>
        <dbReference type="HAMAP-Rule" id="MF_00172"/>
    </source>
</evidence>
<name>METE_STRA3</name>
<accession>P65344</accession>
<accession>Q8DX10</accession>
<accession>Q8E2V9</accession>